<name>PA_I01A0</name>
<proteinExistence type="inferred from homology"/>
<gene>
    <name evidence="2" type="primary">PA</name>
</gene>
<sequence length="716" mass="82734">MEDFVRQCFNPMIVELAEKAMKEYGEDPKIETNKFAAICTHLEVCFMYSDFHFIDERGESTIVESSDPNALLKHRFEIIEGRDRTMAWTVVNSICNTTGVEKPKFLPDLYDYKENRFIEIGVTRREVHTYYLEKANKIKSEKTHIHIFSFTGEEMATKADYTLDEESRARIKTRLYTIRQEMASRGLWDSFRQSERGEETIEERFEITGTMRRLADQSLPPNFSSLENFRAYVDGFEPNGCIEGKLSQMSKEVNARIEPFLKTTPRPLRLPDGPPCFQRSKFLLMDALKLSIEDPSHEGEGIPLYDAIKCMKTFFGWKEPNIVKPHEKGINPNYLLAWKQVLAELQDIENEEKIPKTKNMRKTSQLKWALGEKMAPEKVDFEDCKDVSDLRQYDSDEPQPRSLASWIQSEFNKACELTDSSWIELDEIGEDVAPIEHIASMRRNYFTAEVSHCRATEYIMKGVYINTALLNASCAAMDDFQLIPMISKCRTKEGRRKTNLYGFIIKGRSHLRNDTDVVNFVSMEFSLTDPRLEPHKWEKYCILEIGDMLLRTAIGQVSRPMFLYVRTNGTSKIKMKWGMEMRRCLLQSLQQIESMIEAESSVKEKDMTREFFENKSETWPIGESPKGMEEGSIGKVCRTLLAKSVFNSLYASPQLEGFSAESRKLLLVVQALRDNLEPGTFDLGGLYEAIEECLINDPWVLLNASWFNSFLTHALK</sequence>
<organismHost>
    <name type="scientific">Aves</name>
    <dbReference type="NCBI Taxonomy" id="8782"/>
</organismHost>
<organismHost>
    <name type="scientific">Felis catus</name>
    <name type="common">Cat</name>
    <name type="synonym">Felis silvestris catus</name>
    <dbReference type="NCBI Taxonomy" id="9685"/>
</organismHost>
<organismHost>
    <name type="scientific">Homo sapiens</name>
    <name type="common">Human</name>
    <dbReference type="NCBI Taxonomy" id="9606"/>
</organismHost>
<organismHost>
    <name type="scientific">Panthera pardus</name>
    <name type="common">Leopard</name>
    <name type="synonym">Felis pardus</name>
    <dbReference type="NCBI Taxonomy" id="9691"/>
</organismHost>
<organismHost>
    <name type="scientific">Panthera tigris</name>
    <name type="common">Tiger</name>
    <dbReference type="NCBI Taxonomy" id="9694"/>
</organismHost>
<organismHost>
    <name type="scientific">Sus scrofa</name>
    <name type="common">Pig</name>
    <dbReference type="NCBI Taxonomy" id="9823"/>
</organismHost>
<keyword id="KW-1157">Cap snatching</keyword>
<keyword id="KW-0255">Endonuclease</keyword>
<keyword id="KW-1262">Eukaryotic host gene expression shutoff by virus</keyword>
<keyword id="KW-1191">Eukaryotic host transcription shutoff by virus</keyword>
<keyword id="KW-1035">Host cytoplasm</keyword>
<keyword id="KW-1190">Host gene expression shutoff by virus</keyword>
<keyword id="KW-1048">Host nucleus</keyword>
<keyword id="KW-0945">Host-virus interaction</keyword>
<keyword id="KW-0378">Hydrolase</keyword>
<keyword id="KW-1104">Inhibition of host RNA polymerase II by virus</keyword>
<keyword id="KW-0464">Manganese</keyword>
<keyword id="KW-0479">Metal-binding</keyword>
<keyword id="KW-0540">Nuclease</keyword>
<keyword id="KW-0597">Phosphoprotein</keyword>
<keyword id="KW-0688">Ribosomal frameshifting</keyword>
<comment type="function">
    <text evidence="2">Plays an essential role in viral RNA transcription and replication by forming the heterotrimeric polymerase complex together with PB1 and PB2 subunits. The complex transcribes viral mRNAs by using a unique mechanism called cap-snatching. It consists in the hijacking and cleavage of host capped pre-mRNAs. These short capped RNAs are then used as primers for viral mRNAs. The PB2 subunit is responsible for the binding of the 5' cap of cellular pre-mRNAs which are subsequently cleaved after 10-13 nucleotides by the PA subunit that carries the endonuclease activity.</text>
</comment>
<comment type="cofactor">
    <cofactor evidence="2">
        <name>Mn(2+)</name>
        <dbReference type="ChEBI" id="CHEBI:29035"/>
    </cofactor>
    <text evidence="2">Binds 2 manganese ions per subunit.</text>
</comment>
<comment type="subunit">
    <text evidence="1 2">Influenza RNA polymerase is composed of three subunits: PB1, PB2 and PA. Interacts (via C-terminus) with PB1 (via N-terminus).</text>
</comment>
<comment type="subcellular location">
    <subcellularLocation>
        <location evidence="2">Host cytoplasm</location>
    </subcellularLocation>
    <subcellularLocation>
        <location evidence="2">Host nucleus</location>
    </subcellularLocation>
    <text evidence="1 2">PB1 and PA are transported in the host nucleus as a complex.</text>
</comment>
<comment type="alternative products">
    <event type="ribosomal frameshifting"/>
    <isoform>
        <id>Q809J7-1</id>
        <name>PA</name>
        <sequence type="displayed"/>
    </isoform>
    <isoform>
        <id>P0DJU4-1</id>
        <name>PA-X</name>
        <sequence type="external"/>
    </isoform>
</comment>
<comment type="PTM">
    <text evidence="1 2">Phosphorylated on serines and threonines by host kinases, including human casein kinase II.</text>
</comment>
<comment type="similarity">
    <text evidence="2">Belongs to the influenza viruses PA family.</text>
</comment>
<comment type="sequence caution">
    <conflict type="frameshift">
        <sequence resource="EMBL-CDS" id="AAO53043"/>
    </conflict>
</comment>
<feature type="chain" id="PRO_0000311129" description="Polymerase acidic protein">
    <location>
        <begin position="1"/>
        <end position="716"/>
    </location>
</feature>
<feature type="short sequence motif" description="Nuclear localization signal 1 (NLS1)" evidence="1 2">
    <location>
        <begin position="124"/>
        <end position="139"/>
    </location>
</feature>
<feature type="short sequence motif" description="Nuclear localization signal 2 (NLS2)" evidence="1 2">
    <location>
        <begin position="184"/>
        <end position="247"/>
    </location>
</feature>
<feature type="binding site" evidence="2">
    <location>
        <position position="41"/>
    </location>
    <ligand>
        <name>Mn(2+)</name>
        <dbReference type="ChEBI" id="CHEBI:29035"/>
        <label>1</label>
    </ligand>
</feature>
<feature type="binding site" evidence="2">
    <location>
        <position position="80"/>
    </location>
    <ligand>
        <name>Mn(2+)</name>
        <dbReference type="ChEBI" id="CHEBI:29035"/>
        <label>2</label>
    </ligand>
</feature>
<feature type="binding site" evidence="2">
    <location>
        <position position="108"/>
    </location>
    <ligand>
        <name>Mn(2+)</name>
        <dbReference type="ChEBI" id="CHEBI:29035"/>
        <label>1</label>
    </ligand>
</feature>
<feature type="binding site" evidence="2">
    <location>
        <position position="108"/>
    </location>
    <ligand>
        <name>Mn(2+)</name>
        <dbReference type="ChEBI" id="CHEBI:29035"/>
        <label>2</label>
    </ligand>
</feature>
<feature type="binding site" evidence="2">
    <location>
        <position position="119"/>
    </location>
    <ligand>
        <name>Mn(2+)</name>
        <dbReference type="ChEBI" id="CHEBI:29035"/>
        <label>1</label>
    </ligand>
</feature>
<feature type="binding site" evidence="2">
    <location>
        <position position="120"/>
    </location>
    <ligand>
        <name>Mn(2+)</name>
        <dbReference type="ChEBI" id="CHEBI:29035"/>
        <label>1</label>
    </ligand>
</feature>
<reference key="1">
    <citation type="journal article" date="2002" name="Proc. Natl. Acad. Sci. U.S.A.">
        <title>Emergence of multiple genotypes of H5N1 avian influenza viruses in Hong Kong SAR.</title>
        <authorList>
            <person name="Guan Y."/>
            <person name="Peiris J.S.M."/>
            <person name="Lipatov A.S."/>
            <person name="Ellis T.M."/>
            <person name="Dyrting K.C."/>
            <person name="Krauss S."/>
            <person name="Zhang L.J."/>
            <person name="Webster R.G."/>
            <person name="Shortridge K.F."/>
        </authorList>
    </citation>
    <scope>NUCLEOTIDE SEQUENCE [GENOMIC RNA]</scope>
</reference>
<reference key="2">
    <citation type="submission" date="2008-03" db="EMBL/GenBank/DDBJ databases">
        <authorList>
            <person name="Li K.S."/>
            <person name="Xu K.M."/>
            <person name="Guan Y."/>
        </authorList>
    </citation>
    <scope>SEQUENCE REVISION</scope>
</reference>
<protein>
    <recommendedName>
        <fullName evidence="2">Polymerase acidic protein</fullName>
        <ecNumber evidence="2">3.1.-.-</ecNumber>
    </recommendedName>
    <alternativeName>
        <fullName evidence="2">RNA-directed RNA polymerase subunit P2</fullName>
    </alternativeName>
</protein>
<dbReference type="EC" id="3.1.-.-" evidence="2"/>
<dbReference type="EMBL" id="AF509200">
    <property type="protein sequence ID" value="AAO53043.2"/>
    <property type="status" value="ALT_FRAME"/>
    <property type="molecule type" value="Genomic_DNA"/>
</dbReference>
<dbReference type="SMR" id="Q809J7"/>
<dbReference type="MEROPS" id="S62.001"/>
<dbReference type="GO" id="GO:0030430">
    <property type="term" value="C:host cell cytoplasm"/>
    <property type="evidence" value="ECO:0007669"/>
    <property type="project" value="UniProtKB-SubCell"/>
</dbReference>
<dbReference type="GO" id="GO:0042025">
    <property type="term" value="C:host cell nucleus"/>
    <property type="evidence" value="ECO:0007669"/>
    <property type="project" value="UniProtKB-SubCell"/>
</dbReference>
<dbReference type="GO" id="GO:0004519">
    <property type="term" value="F:endonuclease activity"/>
    <property type="evidence" value="ECO:0007669"/>
    <property type="project" value="UniProtKB-KW"/>
</dbReference>
<dbReference type="GO" id="GO:0046872">
    <property type="term" value="F:metal ion binding"/>
    <property type="evidence" value="ECO:0007669"/>
    <property type="project" value="UniProtKB-KW"/>
</dbReference>
<dbReference type="GO" id="GO:0003723">
    <property type="term" value="F:RNA binding"/>
    <property type="evidence" value="ECO:0007669"/>
    <property type="project" value="UniProtKB-UniRule"/>
</dbReference>
<dbReference type="GO" id="GO:0075526">
    <property type="term" value="P:cap snatching"/>
    <property type="evidence" value="ECO:0007669"/>
    <property type="project" value="UniProtKB-UniRule"/>
</dbReference>
<dbReference type="GO" id="GO:0006351">
    <property type="term" value="P:DNA-templated transcription"/>
    <property type="evidence" value="ECO:0007669"/>
    <property type="project" value="UniProtKB-UniRule"/>
</dbReference>
<dbReference type="GO" id="GO:0039657">
    <property type="term" value="P:symbiont-mediated suppression of host gene expression"/>
    <property type="evidence" value="ECO:0007669"/>
    <property type="project" value="UniProtKB-KW"/>
</dbReference>
<dbReference type="GO" id="GO:0039523">
    <property type="term" value="P:symbiont-mediated suppression of host mRNA transcription via inhibition of RNA polymerase II activity"/>
    <property type="evidence" value="ECO:0007669"/>
    <property type="project" value="UniProtKB-UniRule"/>
</dbReference>
<dbReference type="GO" id="GO:0039694">
    <property type="term" value="P:viral RNA genome replication"/>
    <property type="evidence" value="ECO:0007669"/>
    <property type="project" value="InterPro"/>
</dbReference>
<dbReference type="GO" id="GO:0075523">
    <property type="term" value="P:viral translational frameshifting"/>
    <property type="evidence" value="ECO:0007669"/>
    <property type="project" value="UniProtKB-KW"/>
</dbReference>
<dbReference type="FunFam" id="3.40.91.90:FF:000001">
    <property type="entry name" value="Polymerase acidic protein"/>
    <property type="match status" value="1"/>
</dbReference>
<dbReference type="Gene3D" id="3.40.91.90">
    <property type="entry name" value="Influenza RNA-dependent RNA polymerase subunit PA, endonuclease domain"/>
    <property type="match status" value="1"/>
</dbReference>
<dbReference type="HAMAP" id="MF_04063">
    <property type="entry name" value="INFV_PA"/>
    <property type="match status" value="1"/>
</dbReference>
<dbReference type="InterPro" id="IPR037534">
    <property type="entry name" value="INFV_PA"/>
</dbReference>
<dbReference type="InterPro" id="IPR001009">
    <property type="entry name" value="PA/PA-X"/>
</dbReference>
<dbReference type="InterPro" id="IPR038372">
    <property type="entry name" value="PA/PA-X_sf"/>
</dbReference>
<dbReference type="Pfam" id="PF00603">
    <property type="entry name" value="Flu_PA"/>
    <property type="match status" value="1"/>
</dbReference>
<evidence type="ECO:0000250" key="1">
    <source>
        <dbReference type="UniProtKB" id="P03433"/>
    </source>
</evidence>
<evidence type="ECO:0000255" key="2">
    <source>
        <dbReference type="HAMAP-Rule" id="MF_04063"/>
    </source>
</evidence>
<accession>Q809J7</accession>
<organism>
    <name type="scientific">Influenza A virus (strain A/Silky Chicken/Hong Kong/SF189/2001 H5N1 genotype A)</name>
    <dbReference type="NCBI Taxonomy" id="196430"/>
    <lineage>
        <taxon>Viruses</taxon>
        <taxon>Riboviria</taxon>
        <taxon>Orthornavirae</taxon>
        <taxon>Negarnaviricota</taxon>
        <taxon>Polyploviricotina</taxon>
        <taxon>Insthoviricetes</taxon>
        <taxon>Articulavirales</taxon>
        <taxon>Orthomyxoviridae</taxon>
        <taxon>Alphainfluenzavirus</taxon>
        <taxon>Alphainfluenzavirus influenzae</taxon>
        <taxon>Influenza A virus</taxon>
    </lineage>
</organism>